<accession>P63328</accession>
<accession>B2RRX2</accession>
<accession>P12816</accession>
<accession>P20652</accession>
<accession>Q3UCU1</accession>
<accession>Q64135</accession>
<proteinExistence type="evidence at protein level"/>
<evidence type="ECO:0000250" key="1">
    <source>
        <dbReference type="UniProtKB" id="P48452"/>
    </source>
</evidence>
<evidence type="ECO:0000250" key="2">
    <source>
        <dbReference type="UniProtKB" id="P63329"/>
    </source>
</evidence>
<evidence type="ECO:0000250" key="3">
    <source>
        <dbReference type="UniProtKB" id="Q08209"/>
    </source>
</evidence>
<evidence type="ECO:0000256" key="4">
    <source>
        <dbReference type="SAM" id="MobiDB-lite"/>
    </source>
</evidence>
<evidence type="ECO:0000269" key="5">
    <source>
    </source>
</evidence>
<evidence type="ECO:0000269" key="6">
    <source>
    </source>
</evidence>
<evidence type="ECO:0000269" key="7">
    <source>
    </source>
</evidence>
<evidence type="ECO:0000269" key="8">
    <source>
    </source>
</evidence>
<evidence type="ECO:0000269" key="9">
    <source>
    </source>
</evidence>
<evidence type="ECO:0000269" key="10">
    <source>
    </source>
</evidence>
<evidence type="ECO:0000269" key="11">
    <source>
    </source>
</evidence>
<evidence type="ECO:0000269" key="12">
    <source>
    </source>
</evidence>
<evidence type="ECO:0000269" key="13">
    <source>
    </source>
</evidence>
<evidence type="ECO:0000269" key="14">
    <source>
    </source>
</evidence>
<evidence type="ECO:0000269" key="15">
    <source>
    </source>
</evidence>
<evidence type="ECO:0000269" key="16">
    <source>
    </source>
</evidence>
<evidence type="ECO:0000269" key="17">
    <source>
    </source>
</evidence>
<evidence type="ECO:0000269" key="18">
    <source>
    </source>
</evidence>
<evidence type="ECO:0000269" key="19">
    <source>
    </source>
</evidence>
<evidence type="ECO:0000269" key="20">
    <source>
    </source>
</evidence>
<evidence type="ECO:0000269" key="21">
    <source>
    </source>
</evidence>
<evidence type="ECO:0000269" key="22">
    <source>
    </source>
</evidence>
<evidence type="ECO:0000303" key="23">
    <source>
    </source>
</evidence>
<evidence type="ECO:0000303" key="24">
    <source>
    </source>
</evidence>
<evidence type="ECO:0000303" key="25">
    <source>
    </source>
</evidence>
<evidence type="ECO:0000305" key="26"/>
<evidence type="ECO:0000305" key="27">
    <source>
    </source>
</evidence>
<evidence type="ECO:0000312" key="28">
    <source>
        <dbReference type="EMBL" id="AAI38613.1"/>
    </source>
</evidence>
<evidence type="ECO:0000312" key="29">
    <source>
        <dbReference type="MGI" id="MGI:107164"/>
    </source>
</evidence>
<evidence type="ECO:0007744" key="30">
    <source>
        <dbReference type="PDB" id="4ORB"/>
    </source>
</evidence>
<evidence type="ECO:0007744" key="31">
    <source>
    </source>
</evidence>
<evidence type="ECO:0007744" key="32">
    <source>
    </source>
</evidence>
<evidence type="ECO:0007829" key="33">
    <source>
        <dbReference type="PDB" id="4ORB"/>
    </source>
</evidence>
<sequence length="521" mass="58644">MSEPKAIDPKLSTTDRVVKAVPFPPSHRLTAKEVFDNDGKPRVDILKAHLMKEGRLEESVALRIITEGASILRQEKNLLDIDAPVTVCGDIHGQFFDLMKLFEVGGSPANTRYLFLGDYVDRGYFSIECVLYLWALKILYPKTLFLLRGNHECRHLTEYFTFKQECKIKYSERVYDACMDAFDCLPLAALMNQQFLCVHGGLSPEINTLDDIRKLDRFKEPPAYGPMCDILWSDPLEDFGNEKTQEHFTHNTVRGCSYFYSYPAVCDFLQHNNLLSILRAHEAQDAGYRMYRKSQTTGFPSLITIFSAPNYLDVYNNKAAVLKYENNVMNIRQFNCSPHPYWLPNFMDVFTWSLPFVGEKVTEMLVNVLNICSDDELGSEEDGFDGATAAARKEVIRNKIRAIGKMARVFSVLREESESVLTLKGLTPTGMLPSGVLSGGKQTLQSATVEAIEADEAIKGFSPQHKITSFEEAKGLDRINERMPPRRDAMPSDANLNSINKALASETNGTDSNGSNSSNIQ</sequence>
<feature type="initiator methionine" description="Removed" evidence="3">
    <location>
        <position position="1"/>
    </location>
</feature>
<feature type="chain" id="PRO_0000058823" description="Protein phosphatase 3 catalytic subunit alpha">
    <location>
        <begin position="2"/>
        <end position="521"/>
    </location>
</feature>
<feature type="region of interest" description="Catalytic" evidence="26">
    <location>
        <begin position="56"/>
        <end position="340"/>
    </location>
</feature>
<feature type="region of interest" description="Interaction with PxIxIF motif in substrate" evidence="3">
    <location>
        <begin position="327"/>
        <end position="336"/>
    </location>
</feature>
<feature type="region of interest" description="Calcineurin B binding" evidence="18">
    <location>
        <begin position="341"/>
        <end position="369"/>
    </location>
</feature>
<feature type="region of interest" description="Calmodulin-binding" evidence="18">
    <location>
        <begin position="392"/>
        <end position="406"/>
    </location>
</feature>
<feature type="region of interest" description="Autoinhibitory segment" evidence="18">
    <location>
        <begin position="407"/>
        <end position="414"/>
    </location>
</feature>
<feature type="region of interest" description="Autoinhibitory domain" evidence="18">
    <location>
        <begin position="465"/>
        <end position="487"/>
    </location>
</feature>
<feature type="region of interest" description="Disordered" evidence="4">
    <location>
        <begin position="475"/>
        <end position="521"/>
    </location>
</feature>
<feature type="short sequence motif" description="SAPNY motif" evidence="3">
    <location>
        <begin position="307"/>
        <end position="311"/>
    </location>
</feature>
<feature type="compositionally biased region" description="Basic and acidic residues" evidence="4">
    <location>
        <begin position="475"/>
        <end position="490"/>
    </location>
</feature>
<feature type="compositionally biased region" description="Low complexity" evidence="4">
    <location>
        <begin position="507"/>
        <end position="521"/>
    </location>
</feature>
<feature type="active site" description="Proton donor" evidence="3">
    <location>
        <position position="151"/>
    </location>
</feature>
<feature type="binding site" evidence="18 30">
    <location>
        <position position="90"/>
    </location>
    <ligand>
        <name>Fe cation</name>
        <dbReference type="ChEBI" id="CHEBI:24875"/>
    </ligand>
</feature>
<feature type="binding site" evidence="18 30">
    <location>
        <position position="92"/>
    </location>
    <ligand>
        <name>Fe cation</name>
        <dbReference type="ChEBI" id="CHEBI:24875"/>
    </ligand>
</feature>
<feature type="binding site" evidence="18 30">
    <location>
        <position position="118"/>
    </location>
    <ligand>
        <name>Fe cation</name>
        <dbReference type="ChEBI" id="CHEBI:24875"/>
    </ligand>
</feature>
<feature type="binding site" evidence="18 30">
    <location>
        <position position="118"/>
    </location>
    <ligand>
        <name>Zn(2+)</name>
        <dbReference type="ChEBI" id="CHEBI:29105"/>
    </ligand>
</feature>
<feature type="binding site" evidence="18 30">
    <location>
        <position position="150"/>
    </location>
    <ligand>
        <name>Zn(2+)</name>
        <dbReference type="ChEBI" id="CHEBI:29105"/>
    </ligand>
</feature>
<feature type="binding site" evidence="18 30">
    <location>
        <position position="199"/>
    </location>
    <ligand>
        <name>Zn(2+)</name>
        <dbReference type="ChEBI" id="CHEBI:29105"/>
    </ligand>
</feature>
<feature type="binding site" evidence="18 30">
    <location>
        <position position="281"/>
    </location>
    <ligand>
        <name>Zn(2+)</name>
        <dbReference type="ChEBI" id="CHEBI:29105"/>
    </ligand>
</feature>
<feature type="site" description="Interaction with PxVP motif in substrate" evidence="3">
    <location>
        <position position="352"/>
    </location>
</feature>
<feature type="modified residue" description="N-acetylserine" evidence="3">
    <location>
        <position position="2"/>
    </location>
</feature>
<feature type="modified residue" description="3'-nitrotyrosine" evidence="31">
    <location>
        <position position="224"/>
    </location>
</feature>
<feature type="modified residue" description="Phosphoserine" evidence="2">
    <location>
        <position position="469"/>
    </location>
</feature>
<feature type="modified residue" description="Phosphoserine" evidence="32">
    <location>
        <position position="492"/>
    </location>
</feature>
<feature type="splice variant" id="VSP_018563" description="In isoform 2." evidence="23">
    <location>
        <begin position="448"/>
        <end position="457"/>
    </location>
</feature>
<feature type="mutagenesis site" description="Loss of catalytic activity. Loss of interaction with PPP3R1/calreticulin B and calmodulin." evidence="18">
    <location>
        <begin position="348"/>
        <end position="521"/>
    </location>
</feature>
<feature type="mutagenesis site" description="Increases catalytic activity independently of calmodulin. Loss of interaction with calmodulin. Does not affect interaction with PPP3R1/calreticulin B." evidence="18">
    <location>
        <begin position="389"/>
        <end position="521"/>
    </location>
</feature>
<feature type="mutagenesis site" description="Increases catalytic activity independently of calmodulin. Does not affect interaction with PPP3R1/calreticulin B and calmodulin." evidence="18">
    <location>
        <begin position="406"/>
        <end position="521"/>
    </location>
</feature>
<feature type="mutagenesis site" description="Increases basal catalytic activity. Does not affect interaction with PPP3R1/calreticulin B and calmodulin." evidence="18">
    <location>
        <begin position="442"/>
        <end position="521"/>
    </location>
</feature>
<feature type="mutagenesis site" description="Greatly reduces inhibition of calcineurin phosphatase activity." evidence="21">
    <original>D</original>
    <variation>N</variation>
    <location>
        <position position="477"/>
    </location>
</feature>
<feature type="helix" evidence="33">
    <location>
        <begin position="31"/>
        <end position="34"/>
    </location>
</feature>
<feature type="helix" evidence="33">
    <location>
        <begin position="43"/>
        <end position="51"/>
    </location>
</feature>
<feature type="helix" evidence="33">
    <location>
        <begin position="58"/>
        <end position="72"/>
    </location>
</feature>
<feature type="strand" evidence="33">
    <location>
        <begin position="77"/>
        <end position="81"/>
    </location>
</feature>
<feature type="strand" evidence="33">
    <location>
        <begin position="83"/>
        <end position="88"/>
    </location>
</feature>
<feature type="helix" evidence="33">
    <location>
        <begin position="95"/>
        <end position="105"/>
    </location>
</feature>
<feature type="turn" evidence="33">
    <location>
        <begin position="108"/>
        <end position="110"/>
    </location>
</feature>
<feature type="strand" evidence="33">
    <location>
        <begin position="113"/>
        <end position="115"/>
    </location>
</feature>
<feature type="strand" evidence="33">
    <location>
        <begin position="120"/>
        <end position="123"/>
    </location>
</feature>
<feature type="helix" evidence="33">
    <location>
        <begin position="126"/>
        <end position="139"/>
    </location>
</feature>
<feature type="turn" evidence="33">
    <location>
        <begin position="141"/>
        <end position="143"/>
    </location>
</feature>
<feature type="strand" evidence="33">
    <location>
        <begin position="144"/>
        <end position="146"/>
    </location>
</feature>
<feature type="helix" evidence="33">
    <location>
        <begin position="154"/>
        <end position="159"/>
    </location>
</feature>
<feature type="helix" evidence="33">
    <location>
        <begin position="161"/>
        <end position="169"/>
    </location>
</feature>
<feature type="helix" evidence="33">
    <location>
        <begin position="172"/>
        <end position="182"/>
    </location>
</feature>
<feature type="strand" evidence="33">
    <location>
        <begin position="188"/>
        <end position="191"/>
    </location>
</feature>
<feature type="turn" evidence="33">
    <location>
        <begin position="192"/>
        <end position="194"/>
    </location>
</feature>
<feature type="strand" evidence="33">
    <location>
        <begin position="195"/>
        <end position="200"/>
    </location>
</feature>
<feature type="helix" evidence="33">
    <location>
        <begin position="209"/>
        <end position="213"/>
    </location>
</feature>
<feature type="strand" evidence="33">
    <location>
        <begin position="223"/>
        <end position="225"/>
    </location>
</feature>
<feature type="helix" evidence="33">
    <location>
        <begin position="226"/>
        <end position="232"/>
    </location>
</feature>
<feature type="turn" evidence="33">
    <location>
        <begin position="237"/>
        <end position="240"/>
    </location>
</feature>
<feature type="strand" evidence="33">
    <location>
        <begin position="248"/>
        <end position="250"/>
    </location>
</feature>
<feature type="turn" evidence="33">
    <location>
        <begin position="252"/>
        <end position="254"/>
    </location>
</feature>
<feature type="strand" evidence="33">
    <location>
        <begin position="255"/>
        <end position="260"/>
    </location>
</feature>
<feature type="helix" evidence="33">
    <location>
        <begin position="262"/>
        <end position="271"/>
    </location>
</feature>
<feature type="strand" evidence="33">
    <location>
        <begin position="275"/>
        <end position="279"/>
    </location>
</feature>
<feature type="strand" evidence="33">
    <location>
        <begin position="286"/>
        <end position="290"/>
    </location>
</feature>
<feature type="turn" evidence="33">
    <location>
        <begin position="295"/>
        <end position="297"/>
    </location>
</feature>
<feature type="strand" evidence="33">
    <location>
        <begin position="298"/>
        <end position="306"/>
    </location>
</feature>
<feature type="helix" evidence="33">
    <location>
        <begin position="311"/>
        <end position="313"/>
    </location>
</feature>
<feature type="strand" evidence="33">
    <location>
        <begin position="318"/>
        <end position="325"/>
    </location>
</feature>
<feature type="strand" evidence="33">
    <location>
        <begin position="328"/>
        <end position="334"/>
    </location>
</feature>
<feature type="helix" evidence="33">
    <location>
        <begin position="344"/>
        <end position="346"/>
    </location>
</feature>
<feature type="helix" evidence="33">
    <location>
        <begin position="349"/>
        <end position="369"/>
    </location>
</feature>
<feature type="helix" evidence="33">
    <location>
        <begin position="470"/>
        <end position="476"/>
    </location>
</feature>
<feature type="helix" evidence="33">
    <location>
        <begin position="478"/>
        <end position="481"/>
    </location>
</feature>
<dbReference type="EC" id="3.1.3.16" evidence="18 21"/>
<dbReference type="EMBL" id="J05479">
    <property type="protein sequence ID" value="AAA37359.1"/>
    <property type="molecule type" value="mRNA"/>
</dbReference>
<dbReference type="EMBL" id="BC138612">
    <property type="protein sequence ID" value="AAI38613.1"/>
    <property type="molecule type" value="mRNA"/>
</dbReference>
<dbReference type="EMBL" id="AK146387">
    <property type="protein sequence ID" value="BAE27131.1"/>
    <property type="molecule type" value="mRNA"/>
</dbReference>
<dbReference type="EMBL" id="AK150393">
    <property type="protein sequence ID" value="BAE29521.1"/>
    <property type="molecule type" value="mRNA"/>
</dbReference>
<dbReference type="EMBL" id="J04134">
    <property type="protein sequence ID" value="AAA37432.1"/>
    <property type="molecule type" value="mRNA"/>
</dbReference>
<dbReference type="EMBL" id="S78668">
    <property type="protein sequence ID" value="AAB34675.1"/>
    <property type="molecule type" value="mRNA"/>
</dbReference>
<dbReference type="CCDS" id="CCDS17860.1">
    <molecule id="P63328-1"/>
</dbReference>
<dbReference type="CCDS" id="CCDS80027.1">
    <molecule id="P63328-2"/>
</dbReference>
<dbReference type="PIR" id="A42232">
    <property type="entry name" value="A31257"/>
</dbReference>
<dbReference type="RefSeq" id="NP_001280551.1">
    <molecule id="P63328-2"/>
    <property type="nucleotide sequence ID" value="NM_001293622.2"/>
</dbReference>
<dbReference type="RefSeq" id="NP_032939.1">
    <molecule id="P63328-1"/>
    <property type="nucleotide sequence ID" value="NM_008913.6"/>
</dbReference>
<dbReference type="PDB" id="4ORB">
    <property type="method" value="X-ray"/>
    <property type="resolution" value="3.11 A"/>
    <property type="chains" value="A=1-521"/>
</dbReference>
<dbReference type="PDB" id="9CHU">
    <property type="method" value="EM"/>
    <property type="resolution" value="3.49 A"/>
    <property type="chains" value="B=2-371"/>
</dbReference>
<dbReference type="PDB" id="9CHV">
    <property type="method" value="EM"/>
    <property type="resolution" value="3.95 A"/>
    <property type="chains" value="B=2-371"/>
</dbReference>
<dbReference type="PDB" id="9CHX">
    <property type="method" value="EM"/>
    <property type="resolution" value="3.50 A"/>
    <property type="chains" value="B=2-371"/>
</dbReference>
<dbReference type="PDBsum" id="4ORB"/>
<dbReference type="PDBsum" id="9CHU"/>
<dbReference type="PDBsum" id="9CHV"/>
<dbReference type="PDBsum" id="9CHX"/>
<dbReference type="BMRB" id="P63328"/>
<dbReference type="EMDB" id="EMD-45602"/>
<dbReference type="EMDB" id="EMD-45603"/>
<dbReference type="EMDB" id="EMD-45604"/>
<dbReference type="SMR" id="P63328"/>
<dbReference type="BioGRID" id="202344">
    <property type="interactions" value="46"/>
</dbReference>
<dbReference type="ComplexPortal" id="CPX-1010">
    <property type="entry name" value="Calcineurin-Calmodulin complex, alpha-R1 variant"/>
</dbReference>
<dbReference type="ComplexPortal" id="CPX-1049">
    <property type="entry name" value="Calcineurin-Calmodulin complex, alpha-R2 variant"/>
</dbReference>
<dbReference type="ComplexPortal" id="CPX-1115">
    <property type="entry name" value="Calcineurin-Calmodulin-AKAP5 complex, alpha-R2 variant"/>
</dbReference>
<dbReference type="ComplexPortal" id="CPX-881">
    <property type="entry name" value="Calcineurin-Calmodulin-AKAP5 complex, alpha-R1 variant"/>
</dbReference>
<dbReference type="CORUM" id="P63328"/>
<dbReference type="DIP" id="DIP-31543N"/>
<dbReference type="FunCoup" id="P63328">
    <property type="interactions" value="2676"/>
</dbReference>
<dbReference type="IntAct" id="P63328">
    <property type="interactions" value="15"/>
</dbReference>
<dbReference type="MINT" id="P63328"/>
<dbReference type="STRING" id="10090.ENSMUSP00000053101"/>
<dbReference type="GlyGen" id="P63328">
    <property type="glycosylation" value="3 sites, 1 N-linked glycan (1 site), 1 O-linked glycan (2 sites)"/>
</dbReference>
<dbReference type="iPTMnet" id="P63328"/>
<dbReference type="PhosphoSitePlus" id="P63328"/>
<dbReference type="SwissPalm" id="P63328"/>
<dbReference type="jPOST" id="P63328"/>
<dbReference type="PaxDb" id="10090-ENSMUSP00000053101"/>
<dbReference type="PeptideAtlas" id="P63328"/>
<dbReference type="ProteomicsDB" id="289791">
    <molecule id="P63328-1"/>
</dbReference>
<dbReference type="ProteomicsDB" id="289792">
    <molecule id="P63328-2"/>
</dbReference>
<dbReference type="Pumba" id="P63328"/>
<dbReference type="Antibodypedia" id="2193">
    <property type="antibodies" value="595 antibodies from 45 providers"/>
</dbReference>
<dbReference type="DNASU" id="19055"/>
<dbReference type="Ensembl" id="ENSMUST00000056758.9">
    <molecule id="P63328-1"/>
    <property type="protein sequence ID" value="ENSMUSP00000053101.9"/>
    <property type="gene ID" value="ENSMUSG00000028161.18"/>
</dbReference>
<dbReference type="Ensembl" id="ENSMUST00000070198.14">
    <molecule id="P63328-2"/>
    <property type="protein sequence ID" value="ENSMUSP00000071040.8"/>
    <property type="gene ID" value="ENSMUSG00000028161.18"/>
</dbReference>
<dbReference type="GeneID" id="19055"/>
<dbReference type="KEGG" id="mmu:19055"/>
<dbReference type="UCSC" id="uc008rmg.2">
    <molecule id="P63328-1"/>
    <property type="organism name" value="mouse"/>
</dbReference>
<dbReference type="UCSC" id="uc008rmh.2">
    <molecule id="P63328-2"/>
    <property type="organism name" value="mouse"/>
</dbReference>
<dbReference type="AGR" id="MGI:107164"/>
<dbReference type="CTD" id="5530"/>
<dbReference type="MGI" id="MGI:107164">
    <property type="gene designation" value="Ppp3ca"/>
</dbReference>
<dbReference type="VEuPathDB" id="HostDB:ENSMUSG00000028161"/>
<dbReference type="eggNOG" id="KOG0375">
    <property type="taxonomic scope" value="Eukaryota"/>
</dbReference>
<dbReference type="GeneTree" id="ENSGT00940000156306"/>
<dbReference type="HOGENOM" id="CLU_004962_6_0_1"/>
<dbReference type="InParanoid" id="P63328"/>
<dbReference type="OMA" id="YPAACNF"/>
<dbReference type="OrthoDB" id="5593063at2759"/>
<dbReference type="PhylomeDB" id="P63328"/>
<dbReference type="TreeFam" id="TF105557"/>
<dbReference type="Reactome" id="R-MMU-2025928">
    <property type="pathway name" value="Calcineurin activates NFAT"/>
</dbReference>
<dbReference type="Reactome" id="R-MMU-2871809">
    <property type="pathway name" value="FCERI mediated Ca+2 mobilization"/>
</dbReference>
<dbReference type="Reactome" id="R-MMU-4086398">
    <property type="pathway name" value="Ca2+ pathway"/>
</dbReference>
<dbReference type="Reactome" id="R-MMU-5607763">
    <property type="pathway name" value="CLEC7A (Dectin-1) induces NFAT activation"/>
</dbReference>
<dbReference type="BioGRID-ORCS" id="19055">
    <property type="hits" value="5 hits in 80 CRISPR screens"/>
</dbReference>
<dbReference type="CD-CODE" id="CE726F99">
    <property type="entry name" value="Postsynaptic density"/>
</dbReference>
<dbReference type="ChiTaRS" id="Ppp3ca">
    <property type="organism name" value="mouse"/>
</dbReference>
<dbReference type="EvolutionaryTrace" id="P63328"/>
<dbReference type="PRO" id="PR:P63328"/>
<dbReference type="Proteomes" id="UP000000589">
    <property type="component" value="Chromosome 3"/>
</dbReference>
<dbReference type="RNAct" id="P63328">
    <property type="molecule type" value="protein"/>
</dbReference>
<dbReference type="Bgee" id="ENSMUSG00000028161">
    <property type="expression patterns" value="Expressed in caudate-putamen and 268 other cell types or tissues"/>
</dbReference>
<dbReference type="ExpressionAtlas" id="P63328">
    <property type="expression patterns" value="baseline and differential"/>
</dbReference>
<dbReference type="GO" id="GO:0005955">
    <property type="term" value="C:calcineurin complex"/>
    <property type="evidence" value="ECO:0000314"/>
    <property type="project" value="UniProtKB"/>
</dbReference>
<dbReference type="GO" id="GO:0005737">
    <property type="term" value="C:cytoplasm"/>
    <property type="evidence" value="ECO:0000314"/>
    <property type="project" value="UniProtKB"/>
</dbReference>
<dbReference type="GO" id="GO:0009898">
    <property type="term" value="C:cytoplasmic side of plasma membrane"/>
    <property type="evidence" value="ECO:0007669"/>
    <property type="project" value="Ensembl"/>
</dbReference>
<dbReference type="GO" id="GO:0005829">
    <property type="term" value="C:cytosol"/>
    <property type="evidence" value="ECO:0000314"/>
    <property type="project" value="MGI"/>
</dbReference>
<dbReference type="GO" id="GO:0043197">
    <property type="term" value="C:dendritic spine"/>
    <property type="evidence" value="ECO:0007669"/>
    <property type="project" value="UniProtKB-SubCell"/>
</dbReference>
<dbReference type="GO" id="GO:0098978">
    <property type="term" value="C:glutamatergic synapse"/>
    <property type="evidence" value="ECO:0000314"/>
    <property type="project" value="SynGO"/>
</dbReference>
<dbReference type="GO" id="GO:0005739">
    <property type="term" value="C:mitochondrion"/>
    <property type="evidence" value="ECO:0000314"/>
    <property type="project" value="MGI"/>
</dbReference>
<dbReference type="GO" id="GO:0005634">
    <property type="term" value="C:nucleus"/>
    <property type="evidence" value="ECO:0000314"/>
    <property type="project" value="MGI"/>
</dbReference>
<dbReference type="GO" id="GO:0008287">
    <property type="term" value="C:protein serine/threonine phosphatase complex"/>
    <property type="evidence" value="ECO:0000303"/>
    <property type="project" value="ComplexPortal"/>
</dbReference>
<dbReference type="GO" id="GO:0042383">
    <property type="term" value="C:sarcolemma"/>
    <property type="evidence" value="ECO:0007669"/>
    <property type="project" value="UniProtKB-SubCell"/>
</dbReference>
<dbReference type="GO" id="GO:0098685">
    <property type="term" value="C:Schaffer collateral - CA1 synapse"/>
    <property type="evidence" value="ECO:0000314"/>
    <property type="project" value="SynGO"/>
</dbReference>
<dbReference type="GO" id="GO:0030018">
    <property type="term" value="C:Z disc"/>
    <property type="evidence" value="ECO:0000314"/>
    <property type="project" value="MGI"/>
</dbReference>
<dbReference type="GO" id="GO:0051117">
    <property type="term" value="F:ATPase binding"/>
    <property type="evidence" value="ECO:0007669"/>
    <property type="project" value="Ensembl"/>
</dbReference>
<dbReference type="GO" id="GO:0004723">
    <property type="term" value="F:calcium-dependent protein serine/threonine phosphatase activity"/>
    <property type="evidence" value="ECO:0000304"/>
    <property type="project" value="Reactome"/>
</dbReference>
<dbReference type="GO" id="GO:0005516">
    <property type="term" value="F:calmodulin binding"/>
    <property type="evidence" value="ECO:0000314"/>
    <property type="project" value="UniProtKB"/>
</dbReference>
<dbReference type="GO" id="GO:0033192">
    <property type="term" value="F:calmodulin-dependent protein phosphatase activity"/>
    <property type="evidence" value="ECO:0000314"/>
    <property type="project" value="UniProtKB"/>
</dbReference>
<dbReference type="GO" id="GO:0046872">
    <property type="term" value="F:metal ion binding"/>
    <property type="evidence" value="ECO:0007669"/>
    <property type="project" value="UniProtKB-KW"/>
</dbReference>
<dbReference type="GO" id="GO:0004721">
    <property type="term" value="F:phosphoprotein phosphatase activity"/>
    <property type="evidence" value="ECO:0000314"/>
    <property type="project" value="MGI"/>
</dbReference>
<dbReference type="GO" id="GO:0046983">
    <property type="term" value="F:protein dimerization activity"/>
    <property type="evidence" value="ECO:0007669"/>
    <property type="project" value="Ensembl"/>
</dbReference>
<dbReference type="GO" id="GO:0033173">
    <property type="term" value="P:calcineurin-NFAT signaling cascade"/>
    <property type="evidence" value="ECO:0000314"/>
    <property type="project" value="MGI"/>
</dbReference>
<dbReference type="GO" id="GO:0006816">
    <property type="term" value="P:calcium ion transport"/>
    <property type="evidence" value="ECO:0000315"/>
    <property type="project" value="MGI"/>
</dbReference>
<dbReference type="GO" id="GO:0019722">
    <property type="term" value="P:calcium-mediated signaling"/>
    <property type="evidence" value="ECO:0000316"/>
    <property type="project" value="MGI"/>
</dbReference>
<dbReference type="GO" id="GO:0014898">
    <property type="term" value="P:cardiac muscle hypertrophy in response to stress"/>
    <property type="evidence" value="ECO:0000316"/>
    <property type="project" value="MGI"/>
</dbReference>
<dbReference type="GO" id="GO:0048813">
    <property type="term" value="P:dendrite morphogenesis"/>
    <property type="evidence" value="ECO:0000315"/>
    <property type="project" value="MGI"/>
</dbReference>
<dbReference type="GO" id="GO:0008544">
    <property type="term" value="P:epidermis development"/>
    <property type="evidence" value="ECO:0000315"/>
    <property type="project" value="UniProtKB"/>
</dbReference>
<dbReference type="GO" id="GO:0060079">
    <property type="term" value="P:excitatory postsynaptic potential"/>
    <property type="evidence" value="ECO:0000316"/>
    <property type="project" value="MGI"/>
</dbReference>
<dbReference type="GO" id="GO:0000082">
    <property type="term" value="P:G1/S transition of mitotic cell cycle"/>
    <property type="evidence" value="ECO:0000315"/>
    <property type="project" value="MGI"/>
</dbReference>
<dbReference type="GO" id="GO:0030216">
    <property type="term" value="P:keratinocyte differentiation"/>
    <property type="evidence" value="ECO:0000315"/>
    <property type="project" value="UniProtKB"/>
</dbReference>
<dbReference type="GO" id="GO:0050804">
    <property type="term" value="P:modulation of chemical synaptic transmission"/>
    <property type="evidence" value="ECO:0000315"/>
    <property type="project" value="UniProtKB"/>
</dbReference>
<dbReference type="GO" id="GO:0033555">
    <property type="term" value="P:multicellular organismal response to stress"/>
    <property type="evidence" value="ECO:0000314"/>
    <property type="project" value="MGI"/>
</dbReference>
<dbReference type="GO" id="GO:0110062">
    <property type="term" value="P:negative regulation of angiotensin-activated signaling pathway"/>
    <property type="evidence" value="ECO:0007669"/>
    <property type="project" value="Ensembl"/>
</dbReference>
<dbReference type="GO" id="GO:1905949">
    <property type="term" value="P:negative regulation of calcium ion import across plasma membrane"/>
    <property type="evidence" value="ECO:0000303"/>
    <property type="project" value="ComplexPortal"/>
</dbReference>
<dbReference type="GO" id="GO:0050774">
    <property type="term" value="P:negative regulation of dendrite morphogenesis"/>
    <property type="evidence" value="ECO:0000315"/>
    <property type="project" value="MGI"/>
</dbReference>
<dbReference type="GO" id="GO:0010629">
    <property type="term" value="P:negative regulation of gene expression"/>
    <property type="evidence" value="ECO:0000314"/>
    <property type="project" value="BHF-UCL"/>
</dbReference>
<dbReference type="GO" id="GO:0023057">
    <property type="term" value="P:negative regulation of signaling"/>
    <property type="evidence" value="ECO:0000315"/>
    <property type="project" value="UniProtKB"/>
</dbReference>
<dbReference type="GO" id="GO:0042104">
    <property type="term" value="P:positive regulation of activated T cell proliferation"/>
    <property type="evidence" value="ECO:0000315"/>
    <property type="project" value="UniProtKB"/>
</dbReference>
<dbReference type="GO" id="GO:0070886">
    <property type="term" value="P:positive regulation of calcineurin-NFAT signaling cascade"/>
    <property type="evidence" value="ECO:0000303"/>
    <property type="project" value="ComplexPortal"/>
</dbReference>
<dbReference type="GO" id="GO:1905665">
    <property type="term" value="P:positive regulation of calcium ion import across plasma membrane"/>
    <property type="evidence" value="ECO:0000303"/>
    <property type="project" value="ComplexPortal"/>
</dbReference>
<dbReference type="GO" id="GO:0010613">
    <property type="term" value="P:positive regulation of cardiac muscle hypertrophy"/>
    <property type="evidence" value="ECO:0000316"/>
    <property type="project" value="BHF-UCL"/>
</dbReference>
<dbReference type="GO" id="GO:1903244">
    <property type="term" value="P:positive regulation of cardiac muscle hypertrophy in response to stress"/>
    <property type="evidence" value="ECO:0000314"/>
    <property type="project" value="BHF-UCL"/>
</dbReference>
<dbReference type="GO" id="GO:0030335">
    <property type="term" value="P:positive regulation of cell migration"/>
    <property type="evidence" value="ECO:0007669"/>
    <property type="project" value="Ensembl"/>
</dbReference>
<dbReference type="GO" id="GO:1905205">
    <property type="term" value="P:positive regulation of connective tissue replacement"/>
    <property type="evidence" value="ECO:0000316"/>
    <property type="project" value="BHF-UCL"/>
</dbReference>
<dbReference type="GO" id="GO:0045807">
    <property type="term" value="P:positive regulation of endocytosis"/>
    <property type="evidence" value="ECO:0000315"/>
    <property type="project" value="ARUK-UCL"/>
</dbReference>
<dbReference type="GO" id="GO:0010628">
    <property type="term" value="P:positive regulation of gene expression"/>
    <property type="evidence" value="ECO:0000314"/>
    <property type="project" value="BHF-UCL"/>
</dbReference>
<dbReference type="GO" id="GO:0090193">
    <property type="term" value="P:positive regulation of glomerulus development"/>
    <property type="evidence" value="ECO:0000315"/>
    <property type="project" value="UniProtKB"/>
</dbReference>
<dbReference type="GO" id="GO:0045669">
    <property type="term" value="P:positive regulation of osteoblast differentiation"/>
    <property type="evidence" value="ECO:0000315"/>
    <property type="project" value="UniProtKB"/>
</dbReference>
<dbReference type="GO" id="GO:0045672">
    <property type="term" value="P:positive regulation of osteoclast differentiation"/>
    <property type="evidence" value="ECO:0000315"/>
    <property type="project" value="UniProtKB"/>
</dbReference>
<dbReference type="GO" id="GO:0046878">
    <property type="term" value="P:positive regulation of saliva secretion"/>
    <property type="evidence" value="ECO:0000315"/>
    <property type="project" value="UniProtKB"/>
</dbReference>
<dbReference type="GO" id="GO:0045944">
    <property type="term" value="P:positive regulation of transcription by RNA polymerase II"/>
    <property type="evidence" value="ECO:0000314"/>
    <property type="project" value="MGI"/>
</dbReference>
<dbReference type="GO" id="GO:0099170">
    <property type="term" value="P:postsynaptic modulation of chemical synaptic transmission"/>
    <property type="evidence" value="ECO:0000314"/>
    <property type="project" value="SynGO"/>
</dbReference>
<dbReference type="GO" id="GO:0006470">
    <property type="term" value="P:protein dephosphorylation"/>
    <property type="evidence" value="ECO:0000314"/>
    <property type="project" value="UniProtKB"/>
</dbReference>
<dbReference type="GO" id="GO:0006606">
    <property type="term" value="P:protein import into nucleus"/>
    <property type="evidence" value="ECO:0000314"/>
    <property type="project" value="MGI"/>
</dbReference>
<dbReference type="GO" id="GO:0061006">
    <property type="term" value="P:regulation of cell proliferation involved in kidney morphogenesis"/>
    <property type="evidence" value="ECO:0000315"/>
    <property type="project" value="UniProtKB"/>
</dbReference>
<dbReference type="GO" id="GO:0097205">
    <property type="term" value="P:renal filtration"/>
    <property type="evidence" value="ECO:0000315"/>
    <property type="project" value="UniProtKB"/>
</dbReference>
<dbReference type="GO" id="GO:0051592">
    <property type="term" value="P:response to calcium ion"/>
    <property type="evidence" value="ECO:0000250"/>
    <property type="project" value="UniProtKB"/>
</dbReference>
<dbReference type="GO" id="GO:0048741">
    <property type="term" value="P:skeletal muscle fiber development"/>
    <property type="evidence" value="ECO:0000315"/>
    <property type="project" value="UniProtKB"/>
</dbReference>
<dbReference type="GO" id="GO:0014883">
    <property type="term" value="P:transition between fast and slow fiber"/>
    <property type="evidence" value="ECO:0000314"/>
    <property type="project" value="MGI"/>
</dbReference>
<dbReference type="CDD" id="cd07416">
    <property type="entry name" value="MPP_PP2B"/>
    <property type="match status" value="1"/>
</dbReference>
<dbReference type="FunFam" id="3.60.21.10:FF:000002">
    <property type="entry name" value="Serine/threonine-protein phosphatase"/>
    <property type="match status" value="1"/>
</dbReference>
<dbReference type="Gene3D" id="3.60.21.10">
    <property type="match status" value="1"/>
</dbReference>
<dbReference type="InterPro" id="IPR004843">
    <property type="entry name" value="Calcineurin-like_PHP_ApaH"/>
</dbReference>
<dbReference type="InterPro" id="IPR029052">
    <property type="entry name" value="Metallo-depent_PP-like"/>
</dbReference>
<dbReference type="InterPro" id="IPR041751">
    <property type="entry name" value="MPP_PP2B"/>
</dbReference>
<dbReference type="InterPro" id="IPR043360">
    <property type="entry name" value="PP2B"/>
</dbReference>
<dbReference type="InterPro" id="IPR006186">
    <property type="entry name" value="Ser/Thr-sp_prot-phosphatase"/>
</dbReference>
<dbReference type="PANTHER" id="PTHR45673">
    <property type="entry name" value="SERINE/THREONINE-PROTEIN PHOSPHATASE 2B CATALYTIC SUBUNIT 1-RELATED"/>
    <property type="match status" value="1"/>
</dbReference>
<dbReference type="Pfam" id="PF00149">
    <property type="entry name" value="Metallophos"/>
    <property type="match status" value="1"/>
</dbReference>
<dbReference type="PRINTS" id="PR00114">
    <property type="entry name" value="STPHPHTASE"/>
</dbReference>
<dbReference type="SMART" id="SM00156">
    <property type="entry name" value="PP2Ac"/>
    <property type="match status" value="1"/>
</dbReference>
<dbReference type="SUPFAM" id="SSF56300">
    <property type="entry name" value="Metallo-dependent phosphatases"/>
    <property type="match status" value="1"/>
</dbReference>
<dbReference type="PROSITE" id="PS00125">
    <property type="entry name" value="SER_THR_PHOSPHATASE"/>
    <property type="match status" value="1"/>
</dbReference>
<organism>
    <name type="scientific">Mus musculus</name>
    <name type="common">Mouse</name>
    <dbReference type="NCBI Taxonomy" id="10090"/>
    <lineage>
        <taxon>Eukaryota</taxon>
        <taxon>Metazoa</taxon>
        <taxon>Chordata</taxon>
        <taxon>Craniata</taxon>
        <taxon>Vertebrata</taxon>
        <taxon>Euteleostomi</taxon>
        <taxon>Mammalia</taxon>
        <taxon>Eutheria</taxon>
        <taxon>Euarchontoglires</taxon>
        <taxon>Glires</taxon>
        <taxon>Rodentia</taxon>
        <taxon>Myomorpha</taxon>
        <taxon>Muroidea</taxon>
        <taxon>Muridae</taxon>
        <taxon>Murinae</taxon>
        <taxon>Mus</taxon>
        <taxon>Mus</taxon>
    </lineage>
</organism>
<keyword id="KW-0002">3D-structure</keyword>
<keyword id="KW-0007">Acetylation</keyword>
<keyword id="KW-0025">Alternative splicing</keyword>
<keyword id="KW-0112">Calmodulin-binding</keyword>
<keyword id="KW-1003">Cell membrane</keyword>
<keyword id="KW-0966">Cell projection</keyword>
<keyword id="KW-0963">Cytoplasm</keyword>
<keyword id="KW-0903">Direct protein sequencing</keyword>
<keyword id="KW-0378">Hydrolase</keyword>
<keyword id="KW-0408">Iron</keyword>
<keyword id="KW-0472">Membrane</keyword>
<keyword id="KW-0479">Metal-binding</keyword>
<keyword id="KW-0944">Nitration</keyword>
<keyword id="KW-0597">Phosphoprotein</keyword>
<keyword id="KW-0904">Protein phosphatase</keyword>
<keyword id="KW-1185">Reference proteome</keyword>
<keyword id="KW-0770">Synapse</keyword>
<keyword id="KW-0862">Zinc</keyword>
<comment type="function">
    <text evidence="1 2 3 5 7 9 10 11 12 13 16 17 18 21 22">Calcium-dependent, calmodulin-stimulated protein phosphatase which plays an essential role in the transduction of intracellular Ca(2+)-mediated signals (PubMed:26794871, PubMed:7791792). Many of the substrates contain a PxIxIT motif and/or a LxVP motif (By similarity). In response to increased Ca(2+) levels, dephosphorylates and activates phosphatase SSH1 which results in cofilin dephosphorylation (By similarity). In response to increased Ca(2+) levels following mitochondrial depolarization, dephosphorylates DNM1L inducing DNM1L translocation to the mitochondrion (By similarity). Positively regulates the CACNA1B/CAV2.2-mediated Ca(2+) release probability at hippocampal neuronal soma and synaptic terminals (By similarity). Dephosphorylates heat shock protein HSPB1 (By similarity). Dephosphorylates and activates transcription factor NFATC1 (By similarity). Dephosphorylates and inactivates transcription factor ELK1 (By similarity). Dephosphorylates DARPP32 (By similarity). May dephosphorylate CRTC2 at 'Ser-171' resulting in CRTC2 dissociation from 14-3-3 proteins (By similarity). Required for postnatal development of the nephrogenic zone and superficial glomeruli in the kidneys, cell cycle homeostasis in the nephrogenic zone, and ultimately normal kidney function (PubMed:15509543). Plays a role in intracellular AQP2 processing and localization to the apical membrane in the kidney, may thereby be required for efficient kidney filtration (PubMed:16735444). Required for secretion of salivary enzymes amylase, peroxidase, lysozyme and sialic acid via formation of secretory vesicles in the submandibular glands (PubMed:21435446). Required for calcineurin activity and homosynaptic depotentiation in the hippocampus (PubMed:10200317). Required for normal differentiation and survival of keratinocytes and therefore required for epidermis superstructure formation (PubMed:19626032). Positively regulates osteoblastic bone formation, via promotion of osteoblast differentiation (PubMed:16286645). Positively regulates osteoclast differentiation, potentially via NFATC1 signaling (PubMed:16968888). May play a role in skeletal muscle fiber type specification, potentially via NFATC1 signaling (PubMed:12773574). Negatively regulates MAP3K14/NIK signaling via inhibition of nuclear translocation of the transcription factors RELA and RELB (PubMed:26029823). Required for antigen-specific T-cell proliferation response (PubMed:8627154). Dephosphorylates KLHL3, promoting the interaction between KLHL3 and WNK4 and subsequent degradation of WNK4 (By similarity). Negatively regulates SLC9A1 activity (By similarity).</text>
</comment>
<comment type="catalytic activity">
    <reaction evidence="18 21">
        <text>O-phospho-L-seryl-[protein] + H2O = L-seryl-[protein] + phosphate</text>
        <dbReference type="Rhea" id="RHEA:20629"/>
        <dbReference type="Rhea" id="RHEA-COMP:9863"/>
        <dbReference type="Rhea" id="RHEA-COMP:11604"/>
        <dbReference type="ChEBI" id="CHEBI:15377"/>
        <dbReference type="ChEBI" id="CHEBI:29999"/>
        <dbReference type="ChEBI" id="CHEBI:43474"/>
        <dbReference type="ChEBI" id="CHEBI:83421"/>
        <dbReference type="EC" id="3.1.3.16"/>
    </reaction>
</comment>
<comment type="catalytic activity">
    <reaction evidence="18 21">
        <text>O-phospho-L-threonyl-[protein] + H2O = L-threonyl-[protein] + phosphate</text>
        <dbReference type="Rhea" id="RHEA:47004"/>
        <dbReference type="Rhea" id="RHEA-COMP:11060"/>
        <dbReference type="Rhea" id="RHEA-COMP:11605"/>
        <dbReference type="ChEBI" id="CHEBI:15377"/>
        <dbReference type="ChEBI" id="CHEBI:30013"/>
        <dbReference type="ChEBI" id="CHEBI:43474"/>
        <dbReference type="ChEBI" id="CHEBI:61977"/>
        <dbReference type="EC" id="3.1.3.16"/>
    </reaction>
</comment>
<comment type="cofactor">
    <cofactor evidence="18">
        <name>Fe(3+)</name>
        <dbReference type="ChEBI" id="CHEBI:29034"/>
    </cofactor>
    <text evidence="18">Binds 1 Fe(3+) ion per subunit.</text>
</comment>
<comment type="cofactor">
    <cofactor evidence="18">
        <name>Zn(2+)</name>
        <dbReference type="ChEBI" id="CHEBI:29105"/>
    </cofactor>
    <text evidence="18">Binds 1 zinc ion per subunit.</text>
</comment>
<comment type="activity regulation">
    <text evidence="1 18">Activated by Ca(2+)-bound calmodulin following an increase in intracellular Ca(2+) (PubMed:26794871). At low Ca(2+) concentrations, the catalytic subunit (also known as calcineurin A) is inactive and is bound to the regulatory subunit (also known as calcineurin B) in which only two high-affinity binding sites are occupied by Ca(2+) (PubMed:26794871). In response to elevated calcium levels, the occupancy of the low-affinity sites on calcineurin B by Ca(2+) causes a conformational change of the C-terminal regulatory domain of calcineurin A, resulting in the exposure of the calmodulin-binding domain and in the partial activation of calcineurin A (PubMed:26794871). The subsequent binding of Ca(2+)-bound calmodulin leads to the displacement of the autoinhibitory domain from the active site and possibly of the autoinhibitory segment from the substrate binding site which fully activates calcineurin A (PubMed:26794871). Inhibited by immunosuppressant drug FK506 (tacrolimus) in complex with FKBP12 and also by immunosuppressant drug cyclosporin A (CsA) in complex with PPIA/cyclophilin A; the inhibition is Ca(2+)-dependent (By similarity).</text>
</comment>
<comment type="subunit">
    <text evidence="1 2 3 6 8 14 15 17 18 19 20">Forms a complex composed of a calmodulin-dependent catalytic subunit (also known as calcineurin A) and a regulatory Ca(2+)-binding subunit (also known as calcineurin B) (PubMed:26794871). There are three catalytic subunits, each encoded by a separate gene (PPP3CA, PPP3CB, and PPP3CC) and two regulatory subunits which are also encoded by separate genes (PPP3R1 and PPP3R2). In response to an increase in Ca(2+) intracellular levels, forms a complex composed of PPP3CA/calcineurin A, calcineurin B and calmodulin (By similarity). Interacts (via calcineurin B binding domain) with regulatory subunit PPP3R1/calcineurin B (PubMed:26794871). Interacts (via calmodulin-binding domain) with calmodulin; the interaction depends on calmodulin binding to Ca(2+) (By similarity). Forms a complex composed of MYOZ2 and ACTN1 (PubMed:11114196). Within the complex interacts with MYOZ2 (PubMed:11114196). Interacts with MYOZ1 (PubMed:11114196). Interacts with MYOZ3 (By similarity). Interacts with CIB1; the interaction increases upon cardiomyocyte hypertrophy (PubMed:20639889). Interacts with CHP1 and CHP2 (By similarity). Interacts with CRTC1 (PubMed:30611118). Interacts with CRTC2 (PubMed:30611118). Interacts with DNM1L; the interaction dephosphorylates DNM1L and promotes its translocation to mitochondria (By similarity). Interacts with CMYA5; this interaction represses calcineurin activity in muscle (PubMed:21427212). Interacts (constitutively active form) with SYNPO2 (By similarity). Interacts with scaffold protein AKAP5 (via IAIIIT motif); the interaction recruits PPP3CA to the plasma membrane following L-type Ca(2+)-channel activation (By similarity). Interacts with NFATC2 (By similarity). Interacts with RCAN3 (By similarity). Interacts with PPIA (By similarity). Interacts with RCAN1 (PubMed:12809556). Interacts with UNC119 (PubMed:31696965). Interacts with C16orf74 (via PxIxIT motif, when phosphorylated on 'Thr-79') (By similarity). Interacts (via N-terminus) with MAP3K14/NIK (via C-terminus and kinase domain) (PubMed:26029823). Interacts with TRAF3 (PubMed:26029823). Interacts with SPATA33 (via PQIIIT motif) (By similarity).</text>
</comment>
<comment type="interaction">
    <interactant intactId="EBI-397208">
        <id>P63328</id>
    </interactant>
    <interactant intactId="EBI-8018890">
        <id>Q3U182</id>
        <label>Crtc2</label>
    </interactant>
    <organismsDiffer>false</organismsDiffer>
    <experiments>2</experiments>
</comment>
<comment type="subcellular location">
    <subcellularLocation>
        <location evidence="10 12">Cytoplasm</location>
    </subcellularLocation>
    <subcellularLocation>
        <location evidence="3">Cell membrane</location>
        <topology evidence="3">Peripheral membrane protein</topology>
    </subcellularLocation>
    <subcellularLocation>
        <location evidence="2">Cell membrane</location>
        <location evidence="2">Sarcolemma</location>
    </subcellularLocation>
    <subcellularLocation>
        <location evidence="2">Cytoplasm</location>
        <location evidence="2">Myofibril</location>
        <location evidence="2">Sarcomere</location>
        <location evidence="2">Z line</location>
    </subcellularLocation>
    <subcellularLocation>
        <location evidence="3">Cell projection</location>
        <location evidence="3">Dendritic spine</location>
    </subcellularLocation>
    <text evidence="2 3">Colocalizes with ACTN1 and MYOZ2 at the Z line in heart and skeletal muscle. Recruited to the cell membrane by scaffold protein AKAP5 following L-type Ca(2+)-channel activation.</text>
</comment>
<comment type="alternative products">
    <event type="alternative splicing"/>
    <isoform>
        <id>P63328-1</id>
        <name>1</name>
        <sequence type="displayed"/>
    </isoform>
    <isoform>
        <id>P63328-2</id>
        <name>2</name>
        <sequence type="described" ref="VSP_018563"/>
    </isoform>
</comment>
<comment type="tissue specificity">
    <text evidence="5 7 9 10 16 22">Expressed in the kidney (at protein level) (PubMed:15509543). Expressed in the salivary gland (at protein level) (PubMed:21435446). Expressed in osteoblasts and bone marrow (at protein level) (PubMed:16286645). Expressed in the brain and the bicep, tricep, soleus and gastrocnemius muscles (at protein level) (PubMed:12773574). Abundantly expressed in the dentate gyrus and the CA1 and CA3 regions of the hippocampus (at protein level) (PubMed:10200317). Expressed in T-lymphocytes (at protein level) (PubMed:8627154). Expressed in embryonic stem cells (PubMed:8627154).</text>
</comment>
<comment type="domain">
    <text evidence="18">The autoinhibitory domain prevents access to the catalytic site.</text>
</comment>
<comment type="domain">
    <text evidence="18">The autoinhibitory segment prevents access to the substrate binding site.</text>
</comment>
<comment type="domain">
    <text evidence="3">Possible isomerization of Pro-309 within the SAPNY motif triggers a conformation switch which affects the organization and thus accessibility of the active site and the substrate binding region (PxIxIF motif). The trans- to cis-transition may favor calcineurin A activation and substrate binding. The reverse cis- to trans-transition may be enhanced by peptidyl-prolyl isomerases such as PPIA.</text>
</comment>
<comment type="disruption phenotype">
    <text evidence="5 7 9 10 11 12 13 16 22">Knockout mice are significantly smaller at postnatal day 18 (P18), including significantly reduced weights of the liver and kidneys (PubMed:15509543, PubMed:16735444). Decreased blood glucose levels (PubMed:16735444). Decreased lumber spine, tibia, and total body bone mass density evident at 6 weeks of age, evidence of decreased density in the lumber spine as early as 3 weeks of age (PubMed:16286645). No change in overall muscle weight (PubMed:12773574). Decreased femur length, reduced cortical trabecular bone thickness (PubMed:16286645). Significantly reduced number of differentiated osteoclasts (PubMed:16968888). Reduced mitochondrial oxidative capacity in slow and intermediate muscle fiber types (PubMed:12773574). Reduced slow and intermediate program type muscle fibers in the biceps and triceps (PubMed:12773574). Decreased number of slow program type muscle fibers and NFAT activity in the soleus (PubMed:12773574). Kidney size and development is normal at P4, however by P18 kidneys show an obvious delay in maturation, displaying a decreased overall mass, poorly defined medullary rays and decreased cortical mass (PubMed:15509543). Upon examination the outer strip of the medulla and cortical regions of the kidneys are significantly decreased (PubMed:15509543). In the cortex there is a persistence of poorly developed surface glomeruli due to attenuation of mesangial cells numbers and a lack of maturation of tubules in the nephrogenic zone (PubMed:15509543). Reduced proliferation and increased apoptosis of cells within the nephrogenic zone at P18, potentially as a result of increased p27 expression (PubMed:15509543). Impaired kidney function evident by increased kidney collagen deposition, serum creatinine levels and decreased urine creatinine concentration from P4 onwards (PubMed:15509543, PubMed:16735444). Loss of AQP2 phosphorylation in response to vasopressin and decreased localization to the apical membrane of inner medullary collecting duct cells (PubMed:16735444). Most mice die between P21 and P28 as a result of progressive kidney failure (PubMed:15509543). Increased salivary osmolality despite normal electrolyte composition and protein content (PubMed:21435446). Decreased activity of amylase, peroxidase, lysozyme and sialic acid in the saliva (PubMed:21435446). Decreased number of secretory vesicles, mucosal acini cell size and protein content of serosal acini in the submandibular glands (PubMed:21435446). Decreased activity of calcineurin in the salivary glands (PubMed:21435446). Decreased thickness of the epidermal stratum spinosum, a thickened corneum and increased sloughing-off of keratinocytes in newborn mice (PubMed:19626032). Decreased thickness of the stratum spinosum is still evident at 4 weeks of age along with decreased skin elasticity (PubMed:19626032). Increased apoptosis in the supra-basal layers and the stratum spinosum of the epidermis (PubMed:19626032). Decrease in NFATc activity in basal epidermal cells and impaired differentiation of epidermal keratinocytes as shown by aberrant expression of the differentiation markers KRT14, KRT10 and IVL (PubMed:19626032). Decreased calcineurin activity in the brain and significant reduction in homosynaptic depotentiation (PubMed:10200317). Decreased calcineurin activity in T-lymphocytes and loss of T-lymphocyte proliferation in response to antigen stimulation (PubMed:8627154).</text>
</comment>
<comment type="similarity">
    <text evidence="26">Belongs to the PPP phosphatase family. PP-2B subfamily.</text>
</comment>
<protein>
    <recommendedName>
        <fullName evidence="29">Protein phosphatase 3 catalytic subunit alpha</fullName>
        <ecNumber evidence="18 21">3.1.3.16</ecNumber>
    </recommendedName>
    <alternativeName>
        <fullName>CAM-PRP catalytic subunit</fullName>
    </alternativeName>
    <alternativeName>
        <fullName evidence="25">Calcineurin A alpha</fullName>
    </alternativeName>
    <alternativeName>
        <fullName evidence="24">Calmodulin-dependent calcineurin A subunit alpha isoform</fullName>
        <shortName evidence="27">CNA alpha</shortName>
    </alternativeName>
    <alternativeName>
        <fullName evidence="3">Serine/threonine-protein phosphatase 2B catalytic subunit alpha isoform</fullName>
    </alternativeName>
</protein>
<gene>
    <name evidence="29" type="primary">Ppp3ca</name>
    <name type="synonym">Calna</name>
</gene>
<name>PP2BA_MOUSE</name>
<reference key="1">
    <citation type="journal article" date="1990" name="J. Biol. Chem.">
        <title>Cloning and characterization of molecular isoforms of the catalytic subunit of calcineurin using nonisotopic methods.</title>
        <authorList>
            <person name="Kincaid R.L."/>
            <person name="Giri P.R."/>
            <person name="Higuchi S."/>
            <person name="Tamura J."/>
            <person name="Dixon S.C."/>
            <person name="Marietta C.A."/>
            <person name="Amorese D.A."/>
            <person name="Martin B.M."/>
        </authorList>
    </citation>
    <scope>NUCLEOTIDE SEQUENCE [MRNA] (ISOFORM 1)</scope>
</reference>
<reference key="2">
    <citation type="journal article" date="2005" name="Science">
        <title>The transcriptional landscape of the mammalian genome.</title>
        <authorList>
            <person name="Carninci P."/>
            <person name="Kasukawa T."/>
            <person name="Katayama S."/>
            <person name="Gough J."/>
            <person name="Frith M.C."/>
            <person name="Maeda N."/>
            <person name="Oyama R."/>
            <person name="Ravasi T."/>
            <person name="Lenhard B."/>
            <person name="Wells C."/>
            <person name="Kodzius R."/>
            <person name="Shimokawa K."/>
            <person name="Bajic V.B."/>
            <person name="Brenner S.E."/>
            <person name="Batalov S."/>
            <person name="Forrest A.R."/>
            <person name="Zavolan M."/>
            <person name="Davis M.J."/>
            <person name="Wilming L.G."/>
            <person name="Aidinis V."/>
            <person name="Allen J.E."/>
            <person name="Ambesi-Impiombato A."/>
            <person name="Apweiler R."/>
            <person name="Aturaliya R.N."/>
            <person name="Bailey T.L."/>
            <person name="Bansal M."/>
            <person name="Baxter L."/>
            <person name="Beisel K.W."/>
            <person name="Bersano T."/>
            <person name="Bono H."/>
            <person name="Chalk A.M."/>
            <person name="Chiu K.P."/>
            <person name="Choudhary V."/>
            <person name="Christoffels A."/>
            <person name="Clutterbuck D.R."/>
            <person name="Crowe M.L."/>
            <person name="Dalla E."/>
            <person name="Dalrymple B.P."/>
            <person name="de Bono B."/>
            <person name="Della Gatta G."/>
            <person name="di Bernardo D."/>
            <person name="Down T."/>
            <person name="Engstrom P."/>
            <person name="Fagiolini M."/>
            <person name="Faulkner G."/>
            <person name="Fletcher C.F."/>
            <person name="Fukushima T."/>
            <person name="Furuno M."/>
            <person name="Futaki S."/>
            <person name="Gariboldi M."/>
            <person name="Georgii-Hemming P."/>
            <person name="Gingeras T.R."/>
            <person name="Gojobori T."/>
            <person name="Green R.E."/>
            <person name="Gustincich S."/>
            <person name="Harbers M."/>
            <person name="Hayashi Y."/>
            <person name="Hensch T.K."/>
            <person name="Hirokawa N."/>
            <person name="Hill D."/>
            <person name="Huminiecki L."/>
            <person name="Iacono M."/>
            <person name="Ikeo K."/>
            <person name="Iwama A."/>
            <person name="Ishikawa T."/>
            <person name="Jakt M."/>
            <person name="Kanapin A."/>
            <person name="Katoh M."/>
            <person name="Kawasawa Y."/>
            <person name="Kelso J."/>
            <person name="Kitamura H."/>
            <person name="Kitano H."/>
            <person name="Kollias G."/>
            <person name="Krishnan S.P."/>
            <person name="Kruger A."/>
            <person name="Kummerfeld S.K."/>
            <person name="Kurochkin I.V."/>
            <person name="Lareau L.F."/>
            <person name="Lazarevic D."/>
            <person name="Lipovich L."/>
            <person name="Liu J."/>
            <person name="Liuni S."/>
            <person name="McWilliam S."/>
            <person name="Madan Babu M."/>
            <person name="Madera M."/>
            <person name="Marchionni L."/>
            <person name="Matsuda H."/>
            <person name="Matsuzawa S."/>
            <person name="Miki H."/>
            <person name="Mignone F."/>
            <person name="Miyake S."/>
            <person name="Morris K."/>
            <person name="Mottagui-Tabar S."/>
            <person name="Mulder N."/>
            <person name="Nakano N."/>
            <person name="Nakauchi H."/>
            <person name="Ng P."/>
            <person name="Nilsson R."/>
            <person name="Nishiguchi S."/>
            <person name="Nishikawa S."/>
            <person name="Nori F."/>
            <person name="Ohara O."/>
            <person name="Okazaki Y."/>
            <person name="Orlando V."/>
            <person name="Pang K.C."/>
            <person name="Pavan W.J."/>
            <person name="Pavesi G."/>
            <person name="Pesole G."/>
            <person name="Petrovsky N."/>
            <person name="Piazza S."/>
            <person name="Reed J."/>
            <person name="Reid J.F."/>
            <person name="Ring B.Z."/>
            <person name="Ringwald M."/>
            <person name="Rost B."/>
            <person name="Ruan Y."/>
            <person name="Salzberg S.L."/>
            <person name="Sandelin A."/>
            <person name="Schneider C."/>
            <person name="Schoenbach C."/>
            <person name="Sekiguchi K."/>
            <person name="Semple C.A."/>
            <person name="Seno S."/>
            <person name="Sessa L."/>
            <person name="Sheng Y."/>
            <person name="Shibata Y."/>
            <person name="Shimada H."/>
            <person name="Shimada K."/>
            <person name="Silva D."/>
            <person name="Sinclair B."/>
            <person name="Sperling S."/>
            <person name="Stupka E."/>
            <person name="Sugiura K."/>
            <person name="Sultana R."/>
            <person name="Takenaka Y."/>
            <person name="Taki K."/>
            <person name="Tammoja K."/>
            <person name="Tan S.L."/>
            <person name="Tang S."/>
            <person name="Taylor M.S."/>
            <person name="Tegner J."/>
            <person name="Teichmann S.A."/>
            <person name="Ueda H.R."/>
            <person name="van Nimwegen E."/>
            <person name="Verardo R."/>
            <person name="Wei C.L."/>
            <person name="Yagi K."/>
            <person name="Yamanishi H."/>
            <person name="Zabarovsky E."/>
            <person name="Zhu S."/>
            <person name="Zimmer A."/>
            <person name="Hide W."/>
            <person name="Bult C."/>
            <person name="Grimmond S.M."/>
            <person name="Teasdale R.D."/>
            <person name="Liu E.T."/>
            <person name="Brusic V."/>
            <person name="Quackenbush J."/>
            <person name="Wahlestedt C."/>
            <person name="Mattick J.S."/>
            <person name="Hume D.A."/>
            <person name="Kai C."/>
            <person name="Sasaki D."/>
            <person name="Tomaru Y."/>
            <person name="Fukuda S."/>
            <person name="Kanamori-Katayama M."/>
            <person name="Suzuki M."/>
            <person name="Aoki J."/>
            <person name="Arakawa T."/>
            <person name="Iida J."/>
            <person name="Imamura K."/>
            <person name="Itoh M."/>
            <person name="Kato T."/>
            <person name="Kawaji H."/>
            <person name="Kawagashira N."/>
            <person name="Kawashima T."/>
            <person name="Kojima M."/>
            <person name="Kondo S."/>
            <person name="Konno H."/>
            <person name="Nakano K."/>
            <person name="Ninomiya N."/>
            <person name="Nishio T."/>
            <person name="Okada M."/>
            <person name="Plessy C."/>
            <person name="Shibata K."/>
            <person name="Shiraki T."/>
            <person name="Suzuki S."/>
            <person name="Tagami M."/>
            <person name="Waki K."/>
            <person name="Watahiki A."/>
            <person name="Okamura-Oho Y."/>
            <person name="Suzuki H."/>
            <person name="Kawai J."/>
            <person name="Hayashizaki Y."/>
        </authorList>
    </citation>
    <scope>NUCLEOTIDE SEQUENCE [LARGE SCALE MRNA] (ISOFORM 2)</scope>
    <source>
        <strain>BALB/cJ</strain>
        <strain>C57BL/6J</strain>
        <tissue>Bone marrow</tissue>
    </source>
</reference>
<reference evidence="28" key="3">
    <citation type="journal article" date="2004" name="Genome Res.">
        <title>The status, quality, and expansion of the NIH full-length cDNA project: the Mammalian Gene Collection (MGC).</title>
        <authorList>
            <consortium name="The MGC Project Team"/>
        </authorList>
    </citation>
    <scope>NUCLEOTIDE SEQUENCE [LARGE SCALE MRNA] (ISOFORM 1)</scope>
</reference>
<reference key="4">
    <citation type="submission" date="2009-01" db="UniProtKB">
        <authorList>
            <person name="Lubec G."/>
            <person name="Kang S.U."/>
            <person name="Sunyer B."/>
            <person name="Chen W.-Q."/>
        </authorList>
    </citation>
    <scope>PROTEIN SEQUENCE OF 64-73; 101-122 AND 425-459</scope>
    <scope>IDENTIFICATION BY MASS SPECTROMETRY</scope>
    <source>
        <strain>C57BL/6J</strain>
        <strain>OF1</strain>
        <tissue>Brain</tissue>
        <tissue>Hippocampus</tissue>
    </source>
</reference>
<reference key="5">
    <citation type="journal article" date="1994" name="J. Biol. Chem.">
        <title>Molecular cloning of a protein serine/threonine phosphatase containing a putative regulatory tetratricopeptide repeat domain.</title>
        <authorList>
            <person name="Becker W."/>
            <person name="Kentrup H."/>
            <person name="Klumpp S."/>
            <person name="Schultz J.E."/>
            <person name="Joost H.G."/>
        </authorList>
    </citation>
    <scope>NUCLEOTIDE SEQUENCE [MRNA] OF 95-116</scope>
</reference>
<reference key="6">
    <citation type="journal article" date="1988" name="Proc. Natl. Acad. Sci. U.S.A.">
        <title>Characterization of a cDNA clone encoding the calmodulin-binding domain of mouse brain calcineurin.</title>
        <authorList>
            <person name="Kincaid R.L."/>
            <person name="Nightingale M.S."/>
            <person name="Martin B.M."/>
        </authorList>
    </citation>
    <scope>NUCLEOTIDE SEQUENCE [MRNA] OF 215-521 (ISOFORM 1)</scope>
</reference>
<reference key="7">
    <citation type="journal article" date="1995" name="Mol. Cell. Biol.">
        <title>Characterization of a mutant calcineurin A alpha gene expressed by EL4 lymphoma cells.</title>
        <authorList>
            <person name="Fruman D.A."/>
            <person name="Pai S.-Y."/>
            <person name="Burakoff S.J."/>
            <person name="Bierer B.E."/>
        </authorList>
    </citation>
    <scope>NUCLEOTIDE SEQUENCE [MRNA] OF 467-491</scope>
    <scope>FUNCTION</scope>
    <scope>CATALYTIC ACTIVITY</scope>
    <scope>MUTAGENESIS OF ASP-477</scope>
</reference>
<reference key="8">
    <citation type="journal article" date="1996" name="J. Exp. Med.">
        <title>T cell responses in calcineurin A alpha-deficient mice.</title>
        <authorList>
            <person name="Zhang B.W."/>
            <person name="Zimmer G."/>
            <person name="Chen J."/>
            <person name="Ladd D."/>
            <person name="Li E."/>
            <person name="Alt F.W."/>
            <person name="Wiederrecht G."/>
            <person name="Cryan J."/>
            <person name="O'Neill E.A."/>
            <person name="Seidman C.E."/>
            <person name="Abbas A.K."/>
            <person name="Seidman J.G."/>
        </authorList>
    </citation>
    <scope>FUNCTION</scope>
    <scope>TISSUE SPECIFICITY</scope>
    <scope>DISRUPTION PHENOTYPE</scope>
</reference>
<reference key="9">
    <citation type="journal article" date="1999" name="Proc. Natl. Acad. Sci. U.S.A.">
        <title>A selective role of calcineurin aalpha in synaptic depotentiation in hippocampus.</title>
        <authorList>
            <person name="Zhuo M."/>
            <person name="Zhang W."/>
            <person name="Son H."/>
            <person name="Mansuy I."/>
            <person name="Sobel R.A."/>
            <person name="Seidman J."/>
            <person name="Kandel E.R."/>
        </authorList>
    </citation>
    <scope>FUNCTION</scope>
    <scope>TISSUE SPECIFICITY</scope>
    <scope>DISRUPTION PHENOTYPE</scope>
</reference>
<reference key="10">
    <citation type="journal article" date="2000" name="Proc. Natl. Acad. Sci. U.S.A.">
        <title>Calsarcins, a novel family of sarcomeric calcineurin-binding proteins.</title>
        <authorList>
            <person name="Frey N."/>
            <person name="Richardson J.A."/>
            <person name="Olson E.N."/>
        </authorList>
    </citation>
    <scope>IDENTIFICATION IN A COMPLEX WITH ACTN1 AND MYOZ2</scope>
    <scope>INTERACTION WITH MYOZ1 AND MYOZ2</scope>
</reference>
<reference key="11">
    <citation type="journal article" date="2003" name="Biochem. J.">
        <title>Phosphorylation of calcipressin 1 increases its ability to inhibit calcineurin and decreases calcipressin half-life.</title>
        <authorList>
            <person name="Genesca L."/>
            <person name="Aubareda A."/>
            <person name="Fuentes J.J."/>
            <person name="Estivill X."/>
            <person name="De La Luna S."/>
            <person name="Perez-Riba M."/>
        </authorList>
    </citation>
    <scope>INTERACTION WITH RCAN1</scope>
</reference>
<reference key="12">
    <citation type="journal article" date="2003" name="Mol. Cell. Biol.">
        <title>Altered skeletal muscle phenotypes in calcineurin Aalpha and Abeta gene-targeted mice.</title>
        <authorList>
            <person name="Parsons S.A."/>
            <person name="Wilkins B.J."/>
            <person name="Bueno O.F."/>
            <person name="Molkentin J.D."/>
        </authorList>
    </citation>
    <scope>FUNCTION</scope>
    <scope>TISSUE SPECIFICITY</scope>
    <scope>DISRUPTION PHENOTYPE</scope>
</reference>
<reference key="13">
    <citation type="journal article" date="2004" name="Am. J. Pathol.">
        <title>Calcineurin A-alpha but not A-beta is required for normal kidney development and function.</title>
        <authorList>
            <person name="Gooch J.L."/>
            <person name="Toro J.J."/>
            <person name="Guler R.L."/>
            <person name="Barnes J.L."/>
        </authorList>
    </citation>
    <scope>FUNCTION</scope>
    <scope>TISSUE SPECIFICITY</scope>
    <scope>DISRUPTION PHENOTYPE</scope>
</reference>
<reference key="14">
    <citation type="journal article" date="2005" name="Proc. Natl. Acad. Sci. U.S.A.">
        <title>Calcineurin regulates bone formation by the osteoblast.</title>
        <authorList>
            <person name="Sun L."/>
            <person name="Blair H.C."/>
            <person name="Peng Y."/>
            <person name="Zaidi N."/>
            <person name="Adebanjo O.A."/>
            <person name="Wu X.B."/>
            <person name="Wu X.Y."/>
            <person name="Iqbal J."/>
            <person name="Epstein S."/>
            <person name="Abe E."/>
            <person name="Moonga B.S."/>
            <person name="Zaidi M."/>
        </authorList>
    </citation>
    <scope>FUNCTION</scope>
    <scope>SUBCELLULAR LOCATION</scope>
    <scope>TISSUE SPECIFICITY</scope>
    <scope>DISRUPTION PHENOTYPE</scope>
</reference>
<reference key="15">
    <citation type="journal article" date="2006" name="Biochemistry">
        <title>Endogenously nitrated proteins in mouse brain: links to neurodegenerative disease.</title>
        <authorList>
            <person name="Sacksteder C.A."/>
            <person name="Qian W.-J."/>
            <person name="Knyushko T.V."/>
            <person name="Wang H."/>
            <person name="Chin M.H."/>
            <person name="Lacan G."/>
            <person name="Melega W.P."/>
            <person name="Camp D.G. II"/>
            <person name="Smith R.D."/>
            <person name="Smith D.J."/>
            <person name="Squier T.C."/>
            <person name="Bigelow D.J."/>
        </authorList>
    </citation>
    <scope>NITRATION [LARGE SCALE ANALYSIS] AT TYR-224</scope>
    <scope>IDENTIFICATION BY MASS SPECTROMETRY [LARGE SCALE ANALYSIS]</scope>
    <source>
        <tissue>Brain</tissue>
    </source>
</reference>
<reference key="16">
    <citation type="journal article" date="2006" name="J. Cell Sci.">
        <title>Loss of calcineurin Aalpha results in altered trafficking of AQP2 and in nephrogenic diabetes insipidus.</title>
        <authorList>
            <person name="Gooch J.L."/>
            <person name="Guler R.L."/>
            <person name="Barnes J.L."/>
            <person name="Toro J.J."/>
        </authorList>
    </citation>
    <scope>FUNCTION</scope>
    <scope>DISRUPTION PHENOTYPE</scope>
</reference>
<reference key="17">
    <citation type="journal article" date="2007" name="Am. J. Physiol.">
        <title>Evidence that calcineurin is required for the genesis of bone-resorbing osteoclasts.</title>
        <authorList>
            <person name="Sun L."/>
            <person name="Peng Y."/>
            <person name="Zaidi N."/>
            <person name="Zhu L.L."/>
            <person name="Iqbal J."/>
            <person name="Yamoah K."/>
            <person name="Wang X."/>
            <person name="Liu P."/>
            <person name="Abe E."/>
            <person name="Moonga B.S."/>
            <person name="Epstein S."/>
            <person name="Zaidi M."/>
        </authorList>
    </citation>
    <scope>FUNCTION</scope>
    <scope>SUBCELLULAR LOCATION</scope>
    <scope>DISRUPTION PHENOTYPE</scope>
</reference>
<reference key="18">
    <citation type="journal article" date="2010" name="Cell">
        <title>A tissue-specific atlas of mouse protein phosphorylation and expression.</title>
        <authorList>
            <person name="Huttlin E.L."/>
            <person name="Jedrychowski M.P."/>
            <person name="Elias J.E."/>
            <person name="Goswami T."/>
            <person name="Rad R."/>
            <person name="Beausoleil S.A."/>
            <person name="Villen J."/>
            <person name="Haas W."/>
            <person name="Sowa M.E."/>
            <person name="Gygi S.P."/>
        </authorList>
    </citation>
    <scope>PHOSPHORYLATION [LARGE SCALE ANALYSIS] AT SER-492</scope>
    <scope>IDENTIFICATION BY MASS SPECTROMETRY [LARGE SCALE ANALYSIS]</scope>
    <source>
        <tissue>Brain</tissue>
        <tissue>Brown adipose tissue</tissue>
        <tissue>Heart</tissue>
        <tissue>Kidney</tissue>
        <tissue>Liver</tissue>
        <tissue>Lung</tissue>
        <tissue>Spleen</tissue>
    </source>
</reference>
<reference key="19">
    <citation type="journal article" date="2010" name="J. Invest. Dermatol.">
        <title>Loss of calcineurin Aalpha alters keratinocyte survival and differentiation.</title>
        <authorList>
            <person name="Pena J.A."/>
            <person name="Losi-Sasaki J.L."/>
            <person name="Gooch J.L."/>
        </authorList>
    </citation>
    <scope>FUNCTION</scope>
    <scope>DISRUPTION PHENOTYPE</scope>
</reference>
<reference key="20">
    <citation type="journal article" date="2010" name="Nat. Med.">
        <title>CIB1 is a regulator of pathological cardiac hypertrophy.</title>
        <authorList>
            <person name="Heineke J."/>
            <person name="Auger-Messier M."/>
            <person name="Correll R.N."/>
            <person name="Xu J."/>
            <person name="Benard M.J."/>
            <person name="Yuan W."/>
            <person name="Drexler H."/>
            <person name="Parise L.V."/>
            <person name="Molkentin J.D."/>
        </authorList>
    </citation>
    <scope>INTERACTION WITH CIB1</scope>
</reference>
<reference key="21">
    <citation type="journal article" date="2011" name="Am. J. Pathol.">
        <title>Rescue of calcineurin Aalpha(-/-) mice reveals a novel role for the alpha isoform in the salivary gland.</title>
        <authorList>
            <person name="Reddy R.N."/>
            <person name="Pena J.A."/>
            <person name="Roberts B.R."/>
            <person name="Williams S.R."/>
            <person name="Price S.R."/>
            <person name="Gooch J.L."/>
        </authorList>
    </citation>
    <scope>FUNCTION</scope>
    <scope>TISSUE SPECIFICITY</scope>
    <scope>DISRUPTION PHENOTYPE</scope>
</reference>
<reference key="22">
    <citation type="journal article" date="2011" name="FASEB J.">
        <title>Myospryn is a calcineurin-interacting protein that negatively modulates slow-fiber-type transformation and skeletal muscle regeneration.</title>
        <authorList>
            <person name="Kielbasa O.M."/>
            <person name="Reynolds J.G."/>
            <person name="Wu C.L."/>
            <person name="Snyder C.M."/>
            <person name="Cho M.Y."/>
            <person name="Weiler H."/>
            <person name="Kandarian S."/>
            <person name="Naya F.J."/>
        </authorList>
    </citation>
    <scope>INTERACTION WITH CMYA5</scope>
</reference>
<reference key="23">
    <citation type="journal article" date="2015" name="Sci. Rep.">
        <title>Catalytic subunits of the phosphatase calcineurin interact with NF-kappaB-inducing kinase (NIK) and attenuate NIK-dependent gene expression.</title>
        <authorList>
            <person name="Shinzawa M."/>
            <person name="Konno H."/>
            <person name="Qin J."/>
            <person name="Akiyama N."/>
            <person name="Miyauchi M."/>
            <person name="Ohashi H."/>
            <person name="Miyamoto-Sato E."/>
            <person name="Yanagawa H."/>
            <person name="Akiyama T."/>
            <person name="Inoue J."/>
        </authorList>
    </citation>
    <scope>FUNCTION</scope>
    <scope>INTERACTION WITH MAP3K14 AND TRAF3</scope>
</reference>
<reference key="24">
    <citation type="journal article" date="2018" name="IScience">
        <title>Mitogenic Signals Stimulate the CREB Coactivator CRTC3 through PP2A Recruitment.</title>
        <authorList>
            <person name="Sonntag T."/>
            <person name="Ostojic J."/>
            <person name="Vaughan J.M."/>
            <person name="Moresco J.J."/>
            <person name="Yoon Y.S."/>
            <person name="Yates J.R. III"/>
            <person name="Montminy M."/>
        </authorList>
    </citation>
    <scope>INTERACTION WITH CRTC1 AND CRTC2</scope>
</reference>
<reference key="25">
    <citation type="journal article" date="2019" name="EMBO J.">
        <title>Cul3-Klhl18 ubiquitin ligase modulates rod transducin translocation during light-dark adaptation.</title>
        <authorList>
            <person name="Chaya T."/>
            <person name="Tsutsumi R."/>
            <person name="Varner L.R."/>
            <person name="Maeda Y."/>
            <person name="Yoshida S."/>
            <person name="Furukawa T."/>
        </authorList>
    </citation>
    <scope>INTERACTION WITH UNC119</scope>
</reference>
<reference key="26">
    <citation type="journal article" date="2016" name="Cell Res.">
        <title>Cooperative autoinhibition and multi-level activation mechanisms of calcineurin.</title>
        <authorList>
            <person name="Li S.J."/>
            <person name="Wang J."/>
            <person name="Ma L."/>
            <person name="Lu C."/>
            <person name="Wang J."/>
            <person name="Wu J.W."/>
            <person name="Wang Z.X."/>
        </authorList>
    </citation>
    <scope>X-RAY CRYSTALLOGRAPHY (3.11 ANGSTROMS) IN COMPLEX WITH PPP3R1; IRON AND ZINC</scope>
    <scope>FUNCTION</scope>
    <scope>CATALYTIC ACTIVITY</scope>
    <scope>ACTIVITY REGULATION</scope>
    <scope>MUTAGENESIS OF 348-ALA--GLN-521; 389-ASP--GLN-521; 406-MET--GLN-521 AND 442-GLN--GLN-521</scope>
</reference>